<organism>
    <name type="scientific">Arabidopsis thaliana</name>
    <name type="common">Mouse-ear cress</name>
    <dbReference type="NCBI Taxonomy" id="3702"/>
    <lineage>
        <taxon>Eukaryota</taxon>
        <taxon>Viridiplantae</taxon>
        <taxon>Streptophyta</taxon>
        <taxon>Embryophyta</taxon>
        <taxon>Tracheophyta</taxon>
        <taxon>Spermatophyta</taxon>
        <taxon>Magnoliopsida</taxon>
        <taxon>eudicotyledons</taxon>
        <taxon>Gunneridae</taxon>
        <taxon>Pentapetalae</taxon>
        <taxon>rosids</taxon>
        <taxon>malvids</taxon>
        <taxon>Brassicales</taxon>
        <taxon>Brassicaceae</taxon>
        <taxon>Camelineae</taxon>
        <taxon>Arabidopsis</taxon>
    </lineage>
</organism>
<protein>
    <recommendedName>
        <fullName>C2 domain-containing protein At1g53590</fullName>
    </recommendedName>
    <alternativeName>
        <fullName>N-terminal-TM-C2 domain type 6 protein 1</fullName>
        <shortName>NTMC2TYPE6.1</shortName>
    </alternativeName>
</protein>
<accession>Q93XX4</accession>
<accession>Q9C8L5</accession>
<accession>Q9LPH4</accession>
<evidence type="ECO:0000255" key="1"/>
<evidence type="ECO:0000255" key="2">
    <source>
        <dbReference type="PROSITE-ProRule" id="PRU00041"/>
    </source>
</evidence>
<evidence type="ECO:0000255" key="3">
    <source>
        <dbReference type="PROSITE-ProRule" id="PRU01194"/>
    </source>
</evidence>
<evidence type="ECO:0000256" key="4">
    <source>
        <dbReference type="SAM" id="MobiDB-lite"/>
    </source>
</evidence>
<evidence type="ECO:0000305" key="5"/>
<comment type="cofactor">
    <cofactor evidence="2">
        <name>Ca(2+)</name>
        <dbReference type="ChEBI" id="CHEBI:29108"/>
    </cofactor>
</comment>
<comment type="subcellular location">
    <subcellularLocation>
        <location evidence="5">Membrane</location>
        <topology evidence="5">Multi-pass membrane protein</topology>
    </subcellularLocation>
</comment>
<comment type="similarity">
    <text evidence="5">Belongs to the extended synaptotagmin family.</text>
</comment>
<comment type="sequence caution" evidence="5">
    <conflict type="erroneous gene model prediction">
        <sequence resource="EMBL-CDS" id="AAF78431"/>
    </conflict>
</comment>
<comment type="sequence caution" evidence="5">
    <conflict type="erroneous gene model prediction">
        <sequence resource="EMBL-CDS" id="AAG51985"/>
    </conflict>
</comment>
<dbReference type="EMBL" id="AC018748">
    <property type="protein sequence ID" value="AAF78431.1"/>
    <property type="status" value="ALT_SEQ"/>
    <property type="molecule type" value="Genomic_DNA"/>
</dbReference>
<dbReference type="EMBL" id="AC024260">
    <property type="protein sequence ID" value="AAG51985.1"/>
    <property type="status" value="ALT_SEQ"/>
    <property type="molecule type" value="Genomic_DNA"/>
</dbReference>
<dbReference type="EMBL" id="CP002684">
    <property type="protein sequence ID" value="AEE32967.1"/>
    <property type="molecule type" value="Genomic_DNA"/>
</dbReference>
<dbReference type="EMBL" id="AY054685">
    <property type="protein sequence ID" value="AAK96876.1"/>
    <property type="molecule type" value="mRNA"/>
</dbReference>
<dbReference type="PIR" id="A96576">
    <property type="entry name" value="A96576"/>
</dbReference>
<dbReference type="RefSeq" id="NP_564637.1">
    <property type="nucleotide sequence ID" value="NM_104237.4"/>
</dbReference>
<dbReference type="SMR" id="Q93XX4"/>
<dbReference type="FunCoup" id="Q93XX4">
    <property type="interactions" value="968"/>
</dbReference>
<dbReference type="STRING" id="3702.Q93XX4"/>
<dbReference type="iPTMnet" id="Q93XX4"/>
<dbReference type="PaxDb" id="3702-AT1G53590.1"/>
<dbReference type="ProteomicsDB" id="222824"/>
<dbReference type="EnsemblPlants" id="AT1G53590.1">
    <property type="protein sequence ID" value="AT1G53590.1"/>
    <property type="gene ID" value="AT1G53590"/>
</dbReference>
<dbReference type="GeneID" id="841794"/>
<dbReference type="Gramene" id="AT1G53590.1">
    <property type="protein sequence ID" value="AT1G53590.1"/>
    <property type="gene ID" value="AT1G53590"/>
</dbReference>
<dbReference type="KEGG" id="ath:AT1G53590"/>
<dbReference type="Araport" id="AT1G53590"/>
<dbReference type="TAIR" id="AT1G53590">
    <property type="gene designation" value="NTMC2T6.1"/>
</dbReference>
<dbReference type="eggNOG" id="KOG1012">
    <property type="taxonomic scope" value="Eukaryota"/>
</dbReference>
<dbReference type="HOGENOM" id="CLU_017566_0_0_1"/>
<dbReference type="InParanoid" id="Q93XX4"/>
<dbReference type="OMA" id="IEEESHC"/>
<dbReference type="PRO" id="PR:Q93XX4"/>
<dbReference type="Proteomes" id="UP000006548">
    <property type="component" value="Chromosome 1"/>
</dbReference>
<dbReference type="ExpressionAtlas" id="Q93XX4">
    <property type="expression patterns" value="baseline and differential"/>
</dbReference>
<dbReference type="GO" id="GO:0016020">
    <property type="term" value="C:membrane"/>
    <property type="evidence" value="ECO:0007669"/>
    <property type="project" value="UniProtKB-SubCell"/>
</dbReference>
<dbReference type="GO" id="GO:0000325">
    <property type="term" value="C:plant-type vacuole"/>
    <property type="evidence" value="ECO:0007005"/>
    <property type="project" value="TAIR"/>
</dbReference>
<dbReference type="GO" id="GO:0008289">
    <property type="term" value="F:lipid binding"/>
    <property type="evidence" value="ECO:0007669"/>
    <property type="project" value="UniProtKB-KW"/>
</dbReference>
<dbReference type="GO" id="GO:0046872">
    <property type="term" value="F:metal ion binding"/>
    <property type="evidence" value="ECO:0007669"/>
    <property type="project" value="UniProtKB-KW"/>
</dbReference>
<dbReference type="GO" id="GO:0006869">
    <property type="term" value="P:lipid transport"/>
    <property type="evidence" value="ECO:0007669"/>
    <property type="project" value="UniProtKB-KW"/>
</dbReference>
<dbReference type="CDD" id="cd00030">
    <property type="entry name" value="C2"/>
    <property type="match status" value="1"/>
</dbReference>
<dbReference type="CDD" id="cd21669">
    <property type="entry name" value="SMP_SF"/>
    <property type="match status" value="1"/>
</dbReference>
<dbReference type="Gene3D" id="2.60.40.150">
    <property type="entry name" value="C2 domain"/>
    <property type="match status" value="1"/>
</dbReference>
<dbReference type="InterPro" id="IPR000008">
    <property type="entry name" value="C2_dom"/>
</dbReference>
<dbReference type="InterPro" id="IPR035892">
    <property type="entry name" value="C2_domain_sf"/>
</dbReference>
<dbReference type="InterPro" id="IPR052847">
    <property type="entry name" value="Ext_Synaptotagmin/KAHRP-like"/>
</dbReference>
<dbReference type="InterPro" id="IPR031468">
    <property type="entry name" value="SMP_LBD"/>
</dbReference>
<dbReference type="PANTHER" id="PTHR47042">
    <property type="entry name" value="C2 DOMAIN-CONTAINING PROTEIN-LIKE"/>
    <property type="match status" value="1"/>
</dbReference>
<dbReference type="PANTHER" id="PTHR47042:SF4">
    <property type="entry name" value="OS02G0313700 PROTEIN"/>
    <property type="match status" value="1"/>
</dbReference>
<dbReference type="Pfam" id="PF00168">
    <property type="entry name" value="C2"/>
    <property type="match status" value="1"/>
</dbReference>
<dbReference type="SMART" id="SM00239">
    <property type="entry name" value="C2"/>
    <property type="match status" value="1"/>
</dbReference>
<dbReference type="SUPFAM" id="SSF49562">
    <property type="entry name" value="C2 domain (Calcium/lipid-binding domain, CaLB)"/>
    <property type="match status" value="1"/>
</dbReference>
<dbReference type="PROSITE" id="PS50004">
    <property type="entry name" value="C2"/>
    <property type="match status" value="1"/>
</dbReference>
<dbReference type="PROSITE" id="PS51847">
    <property type="entry name" value="SMP"/>
    <property type="match status" value="1"/>
</dbReference>
<proteinExistence type="evidence at protein level"/>
<keyword id="KW-0106">Calcium</keyword>
<keyword id="KW-0175">Coiled coil</keyword>
<keyword id="KW-0445">Lipid transport</keyword>
<keyword id="KW-0446">Lipid-binding</keyword>
<keyword id="KW-0472">Membrane</keyword>
<keyword id="KW-0479">Metal-binding</keyword>
<keyword id="KW-1185">Reference proteome</keyword>
<keyword id="KW-0812">Transmembrane</keyword>
<keyword id="KW-1133">Transmembrane helix</keyword>
<keyword id="KW-0813">Transport</keyword>
<reference key="1">
    <citation type="journal article" date="2000" name="Nature">
        <title>Sequence and analysis of chromosome 1 of the plant Arabidopsis thaliana.</title>
        <authorList>
            <person name="Theologis A."/>
            <person name="Ecker J.R."/>
            <person name="Palm C.J."/>
            <person name="Federspiel N.A."/>
            <person name="Kaul S."/>
            <person name="White O."/>
            <person name="Alonso J."/>
            <person name="Altafi H."/>
            <person name="Araujo R."/>
            <person name="Bowman C.L."/>
            <person name="Brooks S.Y."/>
            <person name="Buehler E."/>
            <person name="Chan A."/>
            <person name="Chao Q."/>
            <person name="Chen H."/>
            <person name="Cheuk R.F."/>
            <person name="Chin C.W."/>
            <person name="Chung M.K."/>
            <person name="Conn L."/>
            <person name="Conway A.B."/>
            <person name="Conway A.R."/>
            <person name="Creasy T.H."/>
            <person name="Dewar K."/>
            <person name="Dunn P."/>
            <person name="Etgu P."/>
            <person name="Feldblyum T.V."/>
            <person name="Feng J.-D."/>
            <person name="Fong B."/>
            <person name="Fujii C.Y."/>
            <person name="Gill J.E."/>
            <person name="Goldsmith A.D."/>
            <person name="Haas B."/>
            <person name="Hansen N.F."/>
            <person name="Hughes B."/>
            <person name="Huizar L."/>
            <person name="Hunter J.L."/>
            <person name="Jenkins J."/>
            <person name="Johnson-Hopson C."/>
            <person name="Khan S."/>
            <person name="Khaykin E."/>
            <person name="Kim C.J."/>
            <person name="Koo H.L."/>
            <person name="Kremenetskaia I."/>
            <person name="Kurtz D.B."/>
            <person name="Kwan A."/>
            <person name="Lam B."/>
            <person name="Langin-Hooper S."/>
            <person name="Lee A."/>
            <person name="Lee J.M."/>
            <person name="Lenz C.A."/>
            <person name="Li J.H."/>
            <person name="Li Y.-P."/>
            <person name="Lin X."/>
            <person name="Liu S.X."/>
            <person name="Liu Z.A."/>
            <person name="Luros J.S."/>
            <person name="Maiti R."/>
            <person name="Marziali A."/>
            <person name="Militscher J."/>
            <person name="Miranda M."/>
            <person name="Nguyen M."/>
            <person name="Nierman W.C."/>
            <person name="Osborne B.I."/>
            <person name="Pai G."/>
            <person name="Peterson J."/>
            <person name="Pham P.K."/>
            <person name="Rizzo M."/>
            <person name="Rooney T."/>
            <person name="Rowley D."/>
            <person name="Sakano H."/>
            <person name="Salzberg S.L."/>
            <person name="Schwartz J.R."/>
            <person name="Shinn P."/>
            <person name="Southwick A.M."/>
            <person name="Sun H."/>
            <person name="Tallon L.J."/>
            <person name="Tambunga G."/>
            <person name="Toriumi M.J."/>
            <person name="Town C.D."/>
            <person name="Utterback T."/>
            <person name="Van Aken S."/>
            <person name="Vaysberg M."/>
            <person name="Vysotskaia V.S."/>
            <person name="Walker M."/>
            <person name="Wu D."/>
            <person name="Yu G."/>
            <person name="Fraser C.M."/>
            <person name="Venter J.C."/>
            <person name="Davis R.W."/>
        </authorList>
    </citation>
    <scope>NUCLEOTIDE SEQUENCE [LARGE SCALE GENOMIC DNA]</scope>
    <source>
        <strain>cv. Columbia</strain>
    </source>
</reference>
<reference key="2">
    <citation type="journal article" date="2017" name="Plant J.">
        <title>Araport11: a complete reannotation of the Arabidopsis thaliana reference genome.</title>
        <authorList>
            <person name="Cheng C.Y."/>
            <person name="Krishnakumar V."/>
            <person name="Chan A.P."/>
            <person name="Thibaud-Nissen F."/>
            <person name="Schobel S."/>
            <person name="Town C.D."/>
        </authorList>
    </citation>
    <scope>GENOME REANNOTATION</scope>
    <source>
        <strain>cv. Columbia</strain>
    </source>
</reference>
<reference key="3">
    <citation type="journal article" date="2003" name="Science">
        <title>Empirical analysis of transcriptional activity in the Arabidopsis genome.</title>
        <authorList>
            <person name="Yamada K."/>
            <person name="Lim J."/>
            <person name="Dale J.M."/>
            <person name="Chen H."/>
            <person name="Shinn P."/>
            <person name="Palm C.J."/>
            <person name="Southwick A.M."/>
            <person name="Wu H.C."/>
            <person name="Kim C.J."/>
            <person name="Nguyen M."/>
            <person name="Pham P.K."/>
            <person name="Cheuk R.F."/>
            <person name="Karlin-Newmann G."/>
            <person name="Liu S.X."/>
            <person name="Lam B."/>
            <person name="Sakano H."/>
            <person name="Wu T."/>
            <person name="Yu G."/>
            <person name="Miranda M."/>
            <person name="Quach H.L."/>
            <person name="Tripp M."/>
            <person name="Chang C.H."/>
            <person name="Lee J.M."/>
            <person name="Toriumi M.J."/>
            <person name="Chan M.M."/>
            <person name="Tang C.C."/>
            <person name="Onodera C.S."/>
            <person name="Deng J.M."/>
            <person name="Akiyama K."/>
            <person name="Ansari Y."/>
            <person name="Arakawa T."/>
            <person name="Banh J."/>
            <person name="Banno F."/>
            <person name="Bowser L."/>
            <person name="Brooks S.Y."/>
            <person name="Carninci P."/>
            <person name="Chao Q."/>
            <person name="Choy N."/>
            <person name="Enju A."/>
            <person name="Goldsmith A.D."/>
            <person name="Gurjal M."/>
            <person name="Hansen N.F."/>
            <person name="Hayashizaki Y."/>
            <person name="Johnson-Hopson C."/>
            <person name="Hsuan V.W."/>
            <person name="Iida K."/>
            <person name="Karnes M."/>
            <person name="Khan S."/>
            <person name="Koesema E."/>
            <person name="Ishida J."/>
            <person name="Jiang P.X."/>
            <person name="Jones T."/>
            <person name="Kawai J."/>
            <person name="Kamiya A."/>
            <person name="Meyers C."/>
            <person name="Nakajima M."/>
            <person name="Narusaka M."/>
            <person name="Seki M."/>
            <person name="Sakurai T."/>
            <person name="Satou M."/>
            <person name="Tamse R."/>
            <person name="Vaysberg M."/>
            <person name="Wallender E.K."/>
            <person name="Wong C."/>
            <person name="Yamamura Y."/>
            <person name="Yuan S."/>
            <person name="Shinozaki K."/>
            <person name="Davis R.W."/>
            <person name="Theologis A."/>
            <person name="Ecker J.R."/>
        </authorList>
    </citation>
    <scope>NUCLEOTIDE SEQUENCE [LARGE SCALE MRNA]</scope>
    <source>
        <strain>cv. Columbia</strain>
    </source>
</reference>
<reference key="4">
    <citation type="journal article" date="2007" name="BMC Genomics">
        <title>Evolutionary genomics of plant genes encoding N-terminal-TM-C2 domain proteins and the similar FAM62 genes and synaptotagmin genes of metazoans.</title>
        <authorList>
            <person name="Craxton M."/>
        </authorList>
    </citation>
    <scope>IDENTIFICATION</scope>
</reference>
<reference key="5">
    <citation type="journal article" date="2009" name="Plant Physiol.">
        <title>Large-scale Arabidopsis phosphoproteome profiling reveals novel chloroplast kinase substrates and phosphorylation networks.</title>
        <authorList>
            <person name="Reiland S."/>
            <person name="Messerli G."/>
            <person name="Baerenfaller K."/>
            <person name="Gerrits B."/>
            <person name="Endler A."/>
            <person name="Grossmann J."/>
            <person name="Gruissem W."/>
            <person name="Baginsky S."/>
        </authorList>
    </citation>
    <scope>IDENTIFICATION BY MASS SPECTROMETRY [LARGE SCALE ANALYSIS]</scope>
</reference>
<gene>
    <name type="primary">NTMC2T6.1</name>
    <name type="ordered locus">At1g53590</name>
    <name type="ORF">F22G10.28</name>
    <name type="ORF">T3F20.10</name>
</gene>
<sequence length="751" mass="84901">MESSLIHHIIIVLLLLWFISSLNRSHAFFYFLALIYLYLVHERYVMRLKRKLQFEERKQANQRRVLSDSESVRWMNYAVEKIWPICMEQIASQKILGPIIPWFLEKYRPWTAKKAVIQHLYMGRNPPLLTDIRVLRQSTGDDHLVLELGMNFLAADDMSAILAVKLRKRLGFGMWTKLHLTGMHVEGKVLIGVKFLRRWPFLGRLRVCFAEPPYFQMTVKPIFTHGLDVAVLPGIAGWLDKLLSIAFEQTLVQPNMLVVDMEKFVSPTSENWFFVDEKEPVAHVLVEVFEASDLKPSDLNGLADPYVKGKLGAYRFKTKIQKKTLSPKWHEEFKIPIFTWDSPSILNIEVGDKDRFVDDTLGECSVNIEEFRGGQRNDMWLSLQNIKMGRLHLAITVIEDNAKSSDDPLKKAKLNKEDIQTSFASDTTNLGSFSSDKSPSVVDNFEPIKIDGQEETAIWVQKPGAEVSQIWEPRKGKSRRLDSQIQRTPNDESLSNGSSSTDDNQEGSKNPMKSVGRGLRKIGSMFHRNVKKEEFLIGSIEEESQSQSPRINLKAVNQKDVGLNFIVDDNLSGPLSGKSLDGESLDAEENSGKGHMKDVAKSFLKQAEKSAKQIKHAFSRKGSMKPRDGHKEIVPESDSGTDSESSDDDDAFTCVKNLATEPGKLTRDGNIERTGDDDHVDSTTLATAKEDSSGDILEDSTDVEAKEEKLKEAAESETRDMDTAMNIKTEDEKGDTLKNIEEGEEKESSSK</sequence>
<name>C2D61_ARATH</name>
<feature type="chain" id="PRO_0000315404" description="C2 domain-containing protein At1g53590">
    <location>
        <begin position="1"/>
        <end position="751"/>
    </location>
</feature>
<feature type="transmembrane region" description="Helical" evidence="1">
    <location>
        <begin position="2"/>
        <end position="22"/>
    </location>
</feature>
<feature type="transmembrane region" description="Helical" evidence="1">
    <location>
        <begin position="26"/>
        <end position="46"/>
    </location>
</feature>
<feature type="domain" description="SMP-LTD" evidence="3">
    <location>
        <begin position="68"/>
        <end position="262"/>
    </location>
</feature>
<feature type="domain" description="C2" evidence="2">
    <location>
        <begin position="267"/>
        <end position="381"/>
    </location>
</feature>
<feature type="region of interest" description="Disordered" evidence="4">
    <location>
        <begin position="469"/>
        <end position="519"/>
    </location>
</feature>
<feature type="region of interest" description="Disordered" evidence="4">
    <location>
        <begin position="572"/>
        <end position="751"/>
    </location>
</feature>
<feature type="coiled-coil region" evidence="1">
    <location>
        <begin position="701"/>
        <end position="728"/>
    </location>
</feature>
<feature type="compositionally biased region" description="Basic and acidic residues" evidence="4">
    <location>
        <begin position="472"/>
        <end position="482"/>
    </location>
</feature>
<feature type="compositionally biased region" description="Polar residues" evidence="4">
    <location>
        <begin position="483"/>
        <end position="502"/>
    </location>
</feature>
<feature type="compositionally biased region" description="Basic and acidic residues" evidence="4">
    <location>
        <begin position="590"/>
        <end position="611"/>
    </location>
</feature>
<feature type="compositionally biased region" description="Basic residues" evidence="4">
    <location>
        <begin position="612"/>
        <end position="624"/>
    </location>
</feature>
<feature type="compositionally biased region" description="Basic and acidic residues" evidence="4">
    <location>
        <begin position="625"/>
        <end position="634"/>
    </location>
</feature>
<feature type="compositionally biased region" description="Acidic residues" evidence="4">
    <location>
        <begin position="639"/>
        <end position="651"/>
    </location>
</feature>
<feature type="compositionally biased region" description="Basic and acidic residues" evidence="4">
    <location>
        <begin position="664"/>
        <end position="681"/>
    </location>
</feature>
<feature type="compositionally biased region" description="Basic and acidic residues" evidence="4">
    <location>
        <begin position="703"/>
        <end position="751"/>
    </location>
</feature>
<feature type="binding site" evidence="2">
    <location>
        <position position="298"/>
    </location>
    <ligand>
        <name>Ca(2+)</name>
        <dbReference type="ChEBI" id="CHEBI:29108"/>
        <label>1</label>
    </ligand>
</feature>
<feature type="binding site" evidence="2">
    <location>
        <position position="298"/>
    </location>
    <ligand>
        <name>Ca(2+)</name>
        <dbReference type="ChEBI" id="CHEBI:29108"/>
        <label>2</label>
    </ligand>
</feature>
<feature type="binding site" evidence="2">
    <location>
        <position position="304"/>
    </location>
    <ligand>
        <name>Ca(2+)</name>
        <dbReference type="ChEBI" id="CHEBI:29108"/>
        <label>1</label>
    </ligand>
</feature>
<feature type="binding site" evidence="2">
    <location>
        <position position="352"/>
    </location>
    <ligand>
        <name>Ca(2+)</name>
        <dbReference type="ChEBI" id="CHEBI:29108"/>
        <label>1</label>
    </ligand>
</feature>
<feature type="binding site" evidence="2">
    <location>
        <position position="352"/>
    </location>
    <ligand>
        <name>Ca(2+)</name>
        <dbReference type="ChEBI" id="CHEBI:29108"/>
        <label>2</label>
    </ligand>
</feature>
<feature type="binding site" evidence="2">
    <location>
        <position position="354"/>
    </location>
    <ligand>
        <name>Ca(2+)</name>
        <dbReference type="ChEBI" id="CHEBI:29108"/>
        <label>1</label>
    </ligand>
</feature>
<feature type="binding site" evidence="2">
    <location>
        <position position="354"/>
    </location>
    <ligand>
        <name>Ca(2+)</name>
        <dbReference type="ChEBI" id="CHEBI:29108"/>
        <label>2</label>
    </ligand>
</feature>
<feature type="binding site" evidence="2">
    <location>
        <position position="359"/>
    </location>
    <ligand>
        <name>Ca(2+)</name>
        <dbReference type="ChEBI" id="CHEBI:29108"/>
        <label>2</label>
    </ligand>
</feature>
<feature type="sequence conflict" description="In Ref. 3; AAK96876." evidence="5" ref="3">
    <original>F</original>
    <variation>Y</variation>
    <location>
        <position position="201"/>
    </location>
</feature>
<feature type="sequence conflict" description="In Ref. 3; AAK96876." evidence="5" ref="3">
    <original>C</original>
    <variation>Y</variation>
    <location>
        <position position="654"/>
    </location>
</feature>